<keyword id="KW-0997">Cell inner membrane</keyword>
<keyword id="KW-1003">Cell membrane</keyword>
<keyword id="KW-0143">Chaperone</keyword>
<keyword id="KW-1015">Disulfide bond</keyword>
<keyword id="KW-0249">Electron transport</keyword>
<keyword id="KW-0472">Membrane</keyword>
<keyword id="KW-0560">Oxidoreductase</keyword>
<keyword id="KW-0676">Redox-active center</keyword>
<keyword id="KW-1185">Reference proteome</keyword>
<keyword id="KW-0812">Transmembrane</keyword>
<keyword id="KW-1133">Transmembrane helix</keyword>
<keyword id="KW-0813">Transport</keyword>
<accession>Q8PC32</accession>
<evidence type="ECO:0000255" key="1">
    <source>
        <dbReference type="HAMAP-Rule" id="MF_00286"/>
    </source>
</evidence>
<reference key="1">
    <citation type="journal article" date="2002" name="Nature">
        <title>Comparison of the genomes of two Xanthomonas pathogens with differing host specificities.</title>
        <authorList>
            <person name="da Silva A.C.R."/>
            <person name="Ferro J.A."/>
            <person name="Reinach F.C."/>
            <person name="Farah C.S."/>
            <person name="Furlan L.R."/>
            <person name="Quaggio R.B."/>
            <person name="Monteiro-Vitorello C.B."/>
            <person name="Van Sluys M.A."/>
            <person name="Almeida N.F. Jr."/>
            <person name="Alves L.M.C."/>
            <person name="do Amaral A.M."/>
            <person name="Bertolini M.C."/>
            <person name="Camargo L.E.A."/>
            <person name="Camarotte G."/>
            <person name="Cannavan F."/>
            <person name="Cardozo J."/>
            <person name="Chambergo F."/>
            <person name="Ciapina L.P."/>
            <person name="Cicarelli R.M.B."/>
            <person name="Coutinho L.L."/>
            <person name="Cursino-Santos J.R."/>
            <person name="El-Dorry H."/>
            <person name="Faria J.B."/>
            <person name="Ferreira A.J.S."/>
            <person name="Ferreira R.C.C."/>
            <person name="Ferro M.I.T."/>
            <person name="Formighieri E.F."/>
            <person name="Franco M.C."/>
            <person name="Greggio C.C."/>
            <person name="Gruber A."/>
            <person name="Katsuyama A.M."/>
            <person name="Kishi L.T."/>
            <person name="Leite R.P."/>
            <person name="Lemos E.G.M."/>
            <person name="Lemos M.V.F."/>
            <person name="Locali E.C."/>
            <person name="Machado M.A."/>
            <person name="Madeira A.M.B.N."/>
            <person name="Martinez-Rossi N.M."/>
            <person name="Martins E.C."/>
            <person name="Meidanis J."/>
            <person name="Menck C.F.M."/>
            <person name="Miyaki C.Y."/>
            <person name="Moon D.H."/>
            <person name="Moreira L.M."/>
            <person name="Novo M.T.M."/>
            <person name="Okura V.K."/>
            <person name="Oliveira M.C."/>
            <person name="Oliveira V.R."/>
            <person name="Pereira H.A."/>
            <person name="Rossi A."/>
            <person name="Sena J.A.D."/>
            <person name="Silva C."/>
            <person name="de Souza R.F."/>
            <person name="Spinola L.A.F."/>
            <person name="Takita M.A."/>
            <person name="Tamura R.E."/>
            <person name="Teixeira E.C."/>
            <person name="Tezza R.I.D."/>
            <person name="Trindade dos Santos M."/>
            <person name="Truffi D."/>
            <person name="Tsai S.M."/>
            <person name="White F.F."/>
            <person name="Setubal J.C."/>
            <person name="Kitajima J.P."/>
        </authorList>
    </citation>
    <scope>NUCLEOTIDE SEQUENCE [LARGE SCALE GENOMIC DNA]</scope>
    <source>
        <strain>ATCC 33913 / DSM 3586 / NCPPB 528 / LMG 568 / P 25</strain>
    </source>
</reference>
<dbReference type="EMBL" id="AE008922">
    <property type="protein sequence ID" value="AAM40231.1"/>
    <property type="molecule type" value="Genomic_DNA"/>
</dbReference>
<dbReference type="RefSeq" id="NP_636307.1">
    <property type="nucleotide sequence ID" value="NC_003902.1"/>
</dbReference>
<dbReference type="RefSeq" id="WP_011036135.1">
    <property type="nucleotide sequence ID" value="NC_003902.1"/>
</dbReference>
<dbReference type="SMR" id="Q8PC32"/>
<dbReference type="STRING" id="190485.XCC0921"/>
<dbReference type="EnsemblBacteria" id="AAM40231">
    <property type="protein sequence ID" value="AAM40231"/>
    <property type="gene ID" value="XCC0921"/>
</dbReference>
<dbReference type="KEGG" id="xcc:XCC0921"/>
<dbReference type="PATRIC" id="fig|190485.4.peg.993"/>
<dbReference type="eggNOG" id="COG1495">
    <property type="taxonomic scope" value="Bacteria"/>
</dbReference>
<dbReference type="HOGENOM" id="CLU_098660_1_1_6"/>
<dbReference type="OrthoDB" id="3711263at2"/>
<dbReference type="Proteomes" id="UP000001010">
    <property type="component" value="Chromosome"/>
</dbReference>
<dbReference type="GO" id="GO:0005886">
    <property type="term" value="C:plasma membrane"/>
    <property type="evidence" value="ECO:0007669"/>
    <property type="project" value="UniProtKB-SubCell"/>
</dbReference>
<dbReference type="GO" id="GO:0009055">
    <property type="term" value="F:electron transfer activity"/>
    <property type="evidence" value="ECO:0007669"/>
    <property type="project" value="UniProtKB-UniRule"/>
</dbReference>
<dbReference type="GO" id="GO:0015035">
    <property type="term" value="F:protein-disulfide reductase activity"/>
    <property type="evidence" value="ECO:0000318"/>
    <property type="project" value="GO_Central"/>
</dbReference>
<dbReference type="GO" id="GO:0006457">
    <property type="term" value="P:protein folding"/>
    <property type="evidence" value="ECO:0000318"/>
    <property type="project" value="GO_Central"/>
</dbReference>
<dbReference type="FunFam" id="1.20.1550.10:FF:000004">
    <property type="entry name" value="Disulfide bond formation protein B"/>
    <property type="match status" value="1"/>
</dbReference>
<dbReference type="Gene3D" id="1.20.1550.10">
    <property type="entry name" value="DsbB-like"/>
    <property type="match status" value="1"/>
</dbReference>
<dbReference type="HAMAP" id="MF_00286">
    <property type="entry name" value="DsbB"/>
    <property type="match status" value="1"/>
</dbReference>
<dbReference type="InterPro" id="IPR003752">
    <property type="entry name" value="DiS_bond_form_DsbB/BdbC"/>
</dbReference>
<dbReference type="InterPro" id="IPR022920">
    <property type="entry name" value="Disulphide_bond_form_DsbB"/>
</dbReference>
<dbReference type="InterPro" id="IPR050183">
    <property type="entry name" value="DsbB"/>
</dbReference>
<dbReference type="InterPro" id="IPR023380">
    <property type="entry name" value="DsbB-like_sf"/>
</dbReference>
<dbReference type="NCBIfam" id="NF003354">
    <property type="entry name" value="PRK04388.1"/>
    <property type="match status" value="1"/>
</dbReference>
<dbReference type="PANTHER" id="PTHR36570">
    <property type="entry name" value="DISULFIDE BOND FORMATION PROTEIN B"/>
    <property type="match status" value="1"/>
</dbReference>
<dbReference type="PANTHER" id="PTHR36570:SF3">
    <property type="entry name" value="DISULFIDE BOND FORMATION PROTEIN B"/>
    <property type="match status" value="1"/>
</dbReference>
<dbReference type="Pfam" id="PF02600">
    <property type="entry name" value="DsbB"/>
    <property type="match status" value="1"/>
</dbReference>
<dbReference type="SUPFAM" id="SSF158442">
    <property type="entry name" value="DsbB-like"/>
    <property type="match status" value="1"/>
</dbReference>
<gene>
    <name evidence="1" type="primary">dsbB</name>
    <name type="ordered locus">XCC0921</name>
</gene>
<protein>
    <recommendedName>
        <fullName evidence="1">Disulfide bond formation protein B</fullName>
    </recommendedName>
    <alternativeName>
        <fullName evidence="1">Disulfide oxidoreductase</fullName>
    </alternativeName>
</protein>
<proteinExistence type="inferred from homology"/>
<comment type="function">
    <text evidence="1">Required for disulfide bond formation in some periplasmic proteins. Acts by oxidizing the DsbA protein.</text>
</comment>
<comment type="subcellular location">
    <subcellularLocation>
        <location evidence="1">Cell inner membrane</location>
        <topology evidence="1">Multi-pass membrane protein</topology>
    </subcellularLocation>
</comment>
<comment type="similarity">
    <text evidence="1">Belongs to the DsbB family.</text>
</comment>
<sequence length="172" mass="18932">MNPFRWGFRAQFLLGFLACAGLLAYAIYVQLHLGLEPCPLCIFQRIAFATLALLFLLGALHGPRGAGGRKAYGVLAFIAAGVGMGIAARHVWVQIRPKDMMSSCGPPLSFLSETMGPFEVFRTVLTGTGDCGNIDWRFLGLSMPMWSMVWFVGLALWALYAGFKHRGPRKLF</sequence>
<feature type="chain" id="PRO_0000059366" description="Disulfide bond formation protein B">
    <location>
        <begin position="1"/>
        <end position="172"/>
    </location>
</feature>
<feature type="topological domain" description="Cytoplasmic" evidence="1">
    <location>
        <begin position="1"/>
        <end position="11"/>
    </location>
</feature>
<feature type="transmembrane region" description="Helical" evidence="1">
    <location>
        <begin position="12"/>
        <end position="28"/>
    </location>
</feature>
<feature type="topological domain" description="Periplasmic" evidence="1">
    <location>
        <begin position="29"/>
        <end position="46"/>
    </location>
</feature>
<feature type="transmembrane region" description="Helical" evidence="1">
    <location>
        <begin position="47"/>
        <end position="63"/>
    </location>
</feature>
<feature type="topological domain" description="Cytoplasmic" evidence="1">
    <location>
        <begin position="64"/>
        <end position="70"/>
    </location>
</feature>
<feature type="transmembrane region" description="Helical" evidence="1">
    <location>
        <begin position="71"/>
        <end position="88"/>
    </location>
</feature>
<feature type="topological domain" description="Periplasmic" evidence="1">
    <location>
        <begin position="89"/>
        <end position="145"/>
    </location>
</feature>
<feature type="transmembrane region" description="Helical" evidence="1">
    <location>
        <begin position="146"/>
        <end position="164"/>
    </location>
</feature>
<feature type="topological domain" description="Cytoplasmic" evidence="1">
    <location>
        <begin position="165"/>
        <end position="172"/>
    </location>
</feature>
<feature type="disulfide bond" description="Redox-active" evidence="1">
    <location>
        <begin position="38"/>
        <end position="41"/>
    </location>
</feature>
<feature type="disulfide bond" description="Redox-active" evidence="1">
    <location>
        <begin position="104"/>
        <end position="131"/>
    </location>
</feature>
<organism>
    <name type="scientific">Xanthomonas campestris pv. campestris (strain ATCC 33913 / DSM 3586 / NCPPB 528 / LMG 568 / P 25)</name>
    <dbReference type="NCBI Taxonomy" id="190485"/>
    <lineage>
        <taxon>Bacteria</taxon>
        <taxon>Pseudomonadati</taxon>
        <taxon>Pseudomonadota</taxon>
        <taxon>Gammaproteobacteria</taxon>
        <taxon>Lysobacterales</taxon>
        <taxon>Lysobacteraceae</taxon>
        <taxon>Xanthomonas</taxon>
    </lineage>
</organism>
<name>DSBB_XANCP</name>